<comment type="function">
    <text evidence="1 2 3 9 12 13">Salicylic acid (SA)-binding substrate-specific adapter of an E3 ubiquitin-protein ligase complex (CUL3-RBX1-BTB) which mediates the ubiquitination and subsequent proteasomal degradation of target proteins (By similarity). Transcription cofactor that represses gene expression in the absence of salicylic acid (SA), when attached to negative cis-elements (W-box) with WRKY transcription factors, but stimulates gene expression upon activation by SA, when sumoylated and attached to positive cis-elements (as-1) with TGA transcription factors, thus confering immunity through a series of gene regulations ending in a significant increase in antimicrobial and defense genes expression (By similarity). Probable component of the salicylic acid (SA) defense signaling pathway and pathogen-induced systemic acquired resistance (SAR) (Probable). May be involved in disease resistance against fungal pathogens (Probable). May be involved in tolerance to salt and osmotic stresses (PubMed:24407603).</text>
</comment>
<comment type="pathway">
    <text evidence="1">Protein modification; protein ubiquitination.</text>
</comment>
<comment type="subcellular location">
    <subcellularLocation>
        <location evidence="2">Cytoplasm</location>
    </subcellularLocation>
    <subcellularLocation>
        <location evidence="2">Nucleus</location>
    </subcellularLocation>
    <subcellularLocation>
        <location evidence="2">Nucleus</location>
        <location evidence="2">Nuclear body</location>
    </subcellularLocation>
    <text evidence="2">Accumulation in nucleus after induction by salicylic acid (SA) treatment or after pathogen infection.</text>
</comment>
<comment type="tissue specificity">
    <text evidence="8">Highly expressed in leaves (PubMed:21973266). Expressed at low levels in roots and stems (PubMed:21973266).</text>
</comment>
<comment type="induction">
    <text evidence="8 9">Induced by salicylic acid (SA) in roots, stems and leaves (PubMed:21973266). Induced by jasmonate in roots (PubMed:21973266). Induced by ethylene in roots and leaves (PubMed:21973266). Induced by salt stress, osmotic shock, cold stress and abscisic acid (ABA) (PubMed:24407603).</text>
</comment>
<comment type="domain">
    <text evidence="1">The BTB/POZ domain mediates the interaction with some component of ubiquitin ligase complexes.</text>
</comment>
<comment type="similarity">
    <text evidence="11">Belongs to the plant 'ANKYRIN-BTB/POZ' family. 'NPR1-like' subfamily.</text>
</comment>
<dbReference type="EMBL" id="FJ598141">
    <property type="protein sequence ID" value="ACU78081.1"/>
    <property type="molecule type" value="mRNA"/>
</dbReference>
<dbReference type="EMBL" id="GU183100">
    <property type="protein sequence ID" value="ADP95762.1"/>
    <property type="molecule type" value="Genomic_DNA"/>
</dbReference>
<dbReference type="SMR" id="E7BQV0"/>
<dbReference type="UniPathway" id="UPA00143"/>
<dbReference type="GO" id="GO:0005737">
    <property type="term" value="C:cytoplasm"/>
    <property type="evidence" value="ECO:0007669"/>
    <property type="project" value="UniProtKB-SubCell"/>
</dbReference>
<dbReference type="GO" id="GO:0016604">
    <property type="term" value="C:nuclear body"/>
    <property type="evidence" value="ECO:0007669"/>
    <property type="project" value="UniProtKB-SubCell"/>
</dbReference>
<dbReference type="GO" id="GO:0008270">
    <property type="term" value="F:zinc ion binding"/>
    <property type="evidence" value="ECO:0007669"/>
    <property type="project" value="UniProtKB-KW"/>
</dbReference>
<dbReference type="GO" id="GO:0006952">
    <property type="term" value="P:defense response"/>
    <property type="evidence" value="ECO:0000304"/>
    <property type="project" value="UniProtKB"/>
</dbReference>
<dbReference type="GO" id="GO:0042742">
    <property type="term" value="P:defense response to bacterium"/>
    <property type="evidence" value="ECO:0007669"/>
    <property type="project" value="TreeGrafter"/>
</dbReference>
<dbReference type="GO" id="GO:0050832">
    <property type="term" value="P:defense response to fungus"/>
    <property type="evidence" value="ECO:0007669"/>
    <property type="project" value="TreeGrafter"/>
</dbReference>
<dbReference type="GO" id="GO:2000022">
    <property type="term" value="P:regulation of jasmonic acid mediated signaling pathway"/>
    <property type="evidence" value="ECO:0007669"/>
    <property type="project" value="InterPro"/>
</dbReference>
<dbReference type="GO" id="GO:2000031">
    <property type="term" value="P:regulation of salicylic acid mediated signaling pathway"/>
    <property type="evidence" value="ECO:0007669"/>
    <property type="project" value="InterPro"/>
</dbReference>
<dbReference type="GO" id="GO:0009651">
    <property type="term" value="P:response to salt stress"/>
    <property type="evidence" value="ECO:0000315"/>
    <property type="project" value="UniProtKB"/>
</dbReference>
<dbReference type="GO" id="GO:0009414">
    <property type="term" value="P:response to water deprivation"/>
    <property type="evidence" value="ECO:0000315"/>
    <property type="project" value="UniProtKB"/>
</dbReference>
<dbReference type="GO" id="GO:0009862">
    <property type="term" value="P:systemic acquired resistance, salicylic acid mediated signaling pathway"/>
    <property type="evidence" value="ECO:0007669"/>
    <property type="project" value="InterPro"/>
</dbReference>
<dbReference type="CDD" id="cd18310">
    <property type="entry name" value="BTB_POZ_NPR_plant"/>
    <property type="match status" value="1"/>
</dbReference>
<dbReference type="FunFam" id="3.30.710.10:FF:000110">
    <property type="entry name" value="Regulatory protein NPR3"/>
    <property type="match status" value="1"/>
</dbReference>
<dbReference type="FunFam" id="1.25.40.20:FF:000123">
    <property type="entry name" value="regulatory protein NPR3-like"/>
    <property type="match status" value="1"/>
</dbReference>
<dbReference type="Gene3D" id="1.25.40.20">
    <property type="entry name" value="Ankyrin repeat-containing domain"/>
    <property type="match status" value="1"/>
</dbReference>
<dbReference type="Gene3D" id="3.30.710.10">
    <property type="entry name" value="Potassium Channel Kv1.1, Chain A"/>
    <property type="match status" value="1"/>
</dbReference>
<dbReference type="InterPro" id="IPR002110">
    <property type="entry name" value="Ankyrin_rpt"/>
</dbReference>
<dbReference type="InterPro" id="IPR036770">
    <property type="entry name" value="Ankyrin_rpt-contain_sf"/>
</dbReference>
<dbReference type="InterPro" id="IPR000210">
    <property type="entry name" value="BTB/POZ_dom"/>
</dbReference>
<dbReference type="InterPro" id="IPR044292">
    <property type="entry name" value="NPR"/>
</dbReference>
<dbReference type="InterPro" id="IPR021094">
    <property type="entry name" value="NPR1/NIM1-like_C"/>
</dbReference>
<dbReference type="InterPro" id="IPR024228">
    <property type="entry name" value="NPR_central_dom"/>
</dbReference>
<dbReference type="InterPro" id="IPR011333">
    <property type="entry name" value="SKP1/BTB/POZ_sf"/>
</dbReference>
<dbReference type="PANTHER" id="PTHR46475">
    <property type="entry name" value="REGULATORY PROTEIN NPR3"/>
    <property type="match status" value="1"/>
</dbReference>
<dbReference type="PANTHER" id="PTHR46475:SF2">
    <property type="entry name" value="REGULATORY PROTEIN NPR3"/>
    <property type="match status" value="1"/>
</dbReference>
<dbReference type="Pfam" id="PF13637">
    <property type="entry name" value="Ank_4"/>
    <property type="match status" value="1"/>
</dbReference>
<dbReference type="Pfam" id="PF00651">
    <property type="entry name" value="BTB"/>
    <property type="match status" value="1"/>
</dbReference>
<dbReference type="Pfam" id="PF11900">
    <property type="entry name" value="DUF3420"/>
    <property type="match status" value="1"/>
</dbReference>
<dbReference type="Pfam" id="PF12313">
    <property type="entry name" value="NPR1_like_C"/>
    <property type="match status" value="1"/>
</dbReference>
<dbReference type="SMART" id="SM00248">
    <property type="entry name" value="ANK"/>
    <property type="match status" value="3"/>
</dbReference>
<dbReference type="SMART" id="SM00225">
    <property type="entry name" value="BTB"/>
    <property type="match status" value="1"/>
</dbReference>
<dbReference type="SUPFAM" id="SSF48403">
    <property type="entry name" value="Ankyrin repeat"/>
    <property type="match status" value="1"/>
</dbReference>
<dbReference type="SUPFAM" id="SSF54695">
    <property type="entry name" value="POZ domain"/>
    <property type="match status" value="1"/>
</dbReference>
<dbReference type="PROSITE" id="PS50297">
    <property type="entry name" value="ANK_REP_REGION"/>
    <property type="match status" value="1"/>
</dbReference>
<dbReference type="PROSITE" id="PS50088">
    <property type="entry name" value="ANK_REPEAT"/>
    <property type="match status" value="1"/>
</dbReference>
<dbReference type="PROSITE" id="PS50097">
    <property type="entry name" value="BTB"/>
    <property type="match status" value="1"/>
</dbReference>
<dbReference type="PROSITE" id="PS52046">
    <property type="entry name" value="ZF_C2HC_NPR"/>
    <property type="match status" value="1"/>
</dbReference>
<organism>
    <name type="scientific">Malus hupehensis</name>
    <name type="common">Chinese crab apple</name>
    <dbReference type="NCBI Taxonomy" id="106556"/>
    <lineage>
        <taxon>Eukaryota</taxon>
        <taxon>Viridiplantae</taxon>
        <taxon>Streptophyta</taxon>
        <taxon>Embryophyta</taxon>
        <taxon>Tracheophyta</taxon>
        <taxon>Spermatophyta</taxon>
        <taxon>Magnoliopsida</taxon>
        <taxon>eudicotyledons</taxon>
        <taxon>Gunneridae</taxon>
        <taxon>Pentapetalae</taxon>
        <taxon>rosids</taxon>
        <taxon>fabids</taxon>
        <taxon>Rosales</taxon>
        <taxon>Rosaceae</taxon>
        <taxon>Amygdaloideae</taxon>
        <taxon>Maleae</taxon>
        <taxon>Malus</taxon>
    </lineage>
</organism>
<accession>E7BQV0</accession>
<accession>G8XUV9</accession>
<reference key="1">
    <citation type="journal article" date="2012" name="Plant Biol.">
        <title>Malus hupehensis NPR1 induces pathogenesis-related protein gene expression in transgenic tobacco.</title>
        <authorList>
            <person name="Zhang J.Y."/>
            <person name="Qiao Y.S."/>
            <person name="Lv D."/>
            <person name="Gao Z.H."/>
            <person name="Qu S.C."/>
            <person name="Zhang Z."/>
        </authorList>
    </citation>
    <scope>NUCLEOTIDE SEQUENCE [MRNA]</scope>
    <scope>FUNCTION</scope>
    <scope>TISSUE SPECIFICITY</scope>
    <scope>INDUCTION</scope>
</reference>
<reference key="2">
    <citation type="journal article" date="2012" name="Mol. Biol. Rep.">
        <title>Overexpressing MhNPR1 in transgenic Fuji apples enhances resistance to apple powdery mildew.</title>
        <authorList>
            <person name="Chen X.K."/>
            <person name="Zhang J.Y."/>
            <person name="Zhang Z."/>
            <person name="Du X.L."/>
            <person name="Du B.B."/>
            <person name="Qu S.C."/>
        </authorList>
    </citation>
    <scope>FUNCTION</scope>
</reference>
<reference key="3">
    <citation type="journal article" date="2014" name="Mol. Biol. Rep.">
        <title>Overexpression of the Malus hupehensis MhNPR1 gene increased tolerance to salt and osmotic stress in transgenic tobacco.</title>
        <authorList>
            <person name="Zhang J.Y."/>
            <person name="Qu S.C."/>
            <person name="Qiao Y.S."/>
            <person name="Zhang Z."/>
            <person name="Guo Z.R."/>
        </authorList>
    </citation>
    <scope>FUNCTION</scope>
    <scope>INDUCTION</scope>
</reference>
<name>NPR1_MALHU</name>
<proteinExistence type="evidence at transcript level"/>
<gene>
    <name evidence="10" type="primary">NPR1</name>
</gene>
<feature type="chain" id="PRO_0000447479" description="BTB/POZ domain and ankyrin repeat-containing protein NPR1">
    <location>
        <begin position="1"/>
        <end position="586"/>
    </location>
</feature>
<feature type="domain" description="BTB" evidence="5">
    <location>
        <begin position="63"/>
        <end position="139"/>
    </location>
</feature>
<feature type="repeat" description="ANK 1" evidence="4">
    <location>
        <begin position="266"/>
        <end position="296"/>
    </location>
</feature>
<feature type="repeat" description="ANK 2" evidence="4">
    <location>
        <begin position="298"/>
        <end position="325"/>
    </location>
</feature>
<feature type="repeat" description="ANK 3" evidence="4">
    <location>
        <begin position="329"/>
        <end position="358"/>
    </location>
</feature>
<feature type="zinc finger region" description="C2HC NPR-type" evidence="6">
    <location>
        <begin position="142"/>
        <end position="156"/>
    </location>
</feature>
<feature type="region of interest" description="Salicylic acid-binding core (SBC)" evidence="3">
    <location>
        <begin position="388"/>
        <end position="522"/>
    </location>
</feature>
<feature type="region of interest" description="Disordered" evidence="7">
    <location>
        <begin position="561"/>
        <end position="586"/>
    </location>
</feature>
<feature type="compositionally biased region" description="Low complexity" evidence="7">
    <location>
        <begin position="562"/>
        <end position="573"/>
    </location>
</feature>
<feature type="binding site" evidence="6">
    <location>
        <position position="145"/>
    </location>
    <ligand>
        <name>Zn(2+)</name>
        <dbReference type="ChEBI" id="CHEBI:29105"/>
    </ligand>
</feature>
<feature type="binding site" evidence="6">
    <location>
        <position position="150"/>
    </location>
    <ligand>
        <name>Zn(2+)</name>
        <dbReference type="ChEBI" id="CHEBI:29105"/>
    </ligand>
</feature>
<feature type="binding site" evidence="6">
    <location>
        <position position="152"/>
    </location>
    <ligand>
        <name>Zn(2+)</name>
        <dbReference type="ChEBI" id="CHEBI:29105"/>
    </ligand>
</feature>
<feature type="binding site" evidence="6">
    <location>
        <position position="155"/>
    </location>
    <ligand>
        <name>Zn(2+)</name>
        <dbReference type="ChEBI" id="CHEBI:29105"/>
    </ligand>
</feature>
<feature type="binding site" evidence="3">
    <location>
        <position position="433"/>
    </location>
    <ligand>
        <name>salicylate</name>
        <dbReference type="ChEBI" id="CHEBI:30762"/>
    </ligand>
</feature>
<feature type="sequence conflict" description="In Ref. 1; ACU78081." evidence="11" ref="1">
    <original>K</original>
    <variation>R</variation>
    <location>
        <position position="93"/>
    </location>
</feature>
<feature type="sequence conflict" description="In Ref. 1; ADP95762." ref="1">
    <original>VELM</original>
    <variation>EELT</variation>
    <location>
        <begin position="163"/>
        <end position="166"/>
    </location>
</feature>
<feature type="sequence conflict" description="In Ref. 1; ACU78081." evidence="11" ref="1">
    <original>D</original>
    <variation>N</variation>
    <location>
        <position position="226"/>
    </location>
</feature>
<feature type="sequence conflict" description="In Ref. 1; ACU78081." evidence="11" ref="1">
    <original>P</original>
    <variation>S</variation>
    <location>
        <position position="258"/>
    </location>
</feature>
<feature type="sequence conflict" description="In Ref. 1; ACU78081." evidence="11" ref="1">
    <original>L</original>
    <variation>P</variation>
    <location>
        <position position="285"/>
    </location>
</feature>
<feature type="sequence conflict" description="In Ref. 1; ACU78081." evidence="11" ref="1">
    <original>A</original>
    <variation>V</variation>
    <location>
        <position position="333"/>
    </location>
</feature>
<feature type="sequence conflict" description="In Ref. 1; ACU78081." evidence="11" ref="1">
    <original>T</original>
    <variation>A</variation>
    <location>
        <position position="383"/>
    </location>
</feature>
<feature type="sequence conflict" description="In Ref. 1; ACU78081." evidence="11" ref="1">
    <original>N</original>
    <variation>S</variation>
    <location>
        <position position="485"/>
    </location>
</feature>
<feature type="sequence conflict" description="In Ref. 1; ACU78081." evidence="11" ref="1">
    <original>S</original>
    <variation>P</variation>
    <location>
        <position position="566"/>
    </location>
</feature>
<feature type="sequence conflict" description="In Ref. 1; ACU78081." evidence="11" ref="1">
    <original>E</original>
    <variation>K</variation>
    <location>
        <position position="575"/>
    </location>
</feature>
<sequence length="586" mass="65083">MAHSAEPSSSLSFTSSPHLSNGSISHNLSCSGSESVPSLEVISLSKLSSSLEQLLIDPGCDYSDADIVVEGIPVGVHRCILASRSGFFRELFKREKGSSGKEDRPKYCMSDFLPYGDVGYEAFLVFLSYVYTGKLKPSPVEVSTCVHNVCAHDACRPAINFVVELMYAASIFQMPDLVSIFERRLLNFVGKALSDNVVPILLVAFHCQLNQLIDQCVDRVARSDIDDISLEKGLPDEVVKKIKILRRNYQQDSDPNLPPADPLHEKRIRRIHKALDSDDVELVKLLLTESNITLDEANALHYAAAYCDPKVVTEVLALGLADVNLRNSRGYTALHIAVMRKEPSIIVLLLTKGARASELTSDGQSAVSICRRLTRPKDYHSKTEQGQEANKDRICIDVLEREMRRNPMAGDASISSQIMPDDLHMELLNLENRVALARLFFPAEAKLAMVIAHAETSEFAAPSSSKGSSGNLMEVDLNETPTVQNKRLHSRLEALMKTVRLGRCYFPHCSEVLDKFIDDDLPHLFYLEPGSSDEQKVKRRRFMELKEEVQKAFDKDKAECNLSGLSSSSSTTSPEKIGANQKVREP</sequence>
<keyword id="KW-0040">ANK repeat</keyword>
<keyword id="KW-0963">Cytoplasm</keyword>
<keyword id="KW-0479">Metal-binding</keyword>
<keyword id="KW-0539">Nucleus</keyword>
<keyword id="KW-0611">Plant defense</keyword>
<keyword id="KW-0677">Repeat</keyword>
<keyword id="KW-0346">Stress response</keyword>
<keyword id="KW-0833">Ubl conjugation pathway</keyword>
<keyword id="KW-0862">Zinc</keyword>
<keyword id="KW-0863">Zinc-finger</keyword>
<evidence type="ECO:0000250" key="1">
    <source>
        <dbReference type="UniProtKB" id="O22286"/>
    </source>
</evidence>
<evidence type="ECO:0000250" key="2">
    <source>
        <dbReference type="UniProtKB" id="P93002"/>
    </source>
</evidence>
<evidence type="ECO:0000250" key="3">
    <source>
        <dbReference type="UniProtKB" id="Q5ICL9"/>
    </source>
</evidence>
<evidence type="ECO:0000255" key="4"/>
<evidence type="ECO:0000255" key="5">
    <source>
        <dbReference type="PROSITE-ProRule" id="PRU00037"/>
    </source>
</evidence>
<evidence type="ECO:0000255" key="6">
    <source>
        <dbReference type="PROSITE-ProRule" id="PRU01391"/>
    </source>
</evidence>
<evidence type="ECO:0000256" key="7">
    <source>
        <dbReference type="SAM" id="MobiDB-lite"/>
    </source>
</evidence>
<evidence type="ECO:0000269" key="8">
    <source>
    </source>
</evidence>
<evidence type="ECO:0000269" key="9">
    <source>
    </source>
</evidence>
<evidence type="ECO:0000303" key="10">
    <source>
    </source>
</evidence>
<evidence type="ECO:0000305" key="11"/>
<evidence type="ECO:0000305" key="12">
    <source>
    </source>
</evidence>
<evidence type="ECO:0000305" key="13">
    <source>
    </source>
</evidence>
<protein>
    <recommendedName>
        <fullName evidence="11">BTB/POZ domain and ankyrin repeat-containing protein NPR1</fullName>
        <shortName evidence="10">MhNPR1</shortName>
    </recommendedName>
    <alternativeName>
        <fullName evidence="10">NPR1 homolog</fullName>
    </alternativeName>
</protein>